<evidence type="ECO:0000255" key="1">
    <source>
        <dbReference type="HAMAP-Rule" id="MF_00444"/>
    </source>
</evidence>
<proteinExistence type="inferred from homology"/>
<comment type="function">
    <text evidence="1">Cleaves peptides in various proteins in a process that requires ATP hydrolysis. Has a chymotrypsin-like activity. Plays a major role in the degradation of misfolded proteins.</text>
</comment>
<comment type="catalytic activity">
    <reaction evidence="1">
        <text>Hydrolysis of proteins to small peptides in the presence of ATP and magnesium. alpha-casein is the usual test substrate. In the absence of ATP, only oligopeptides shorter than five residues are hydrolyzed (such as succinyl-Leu-Tyr-|-NHMec, and Leu-Tyr-Leu-|-Tyr-Trp, in which cleavage of the -Tyr-|-Leu- and -Tyr-|-Trp bonds also occurs).</text>
        <dbReference type="EC" id="3.4.21.92"/>
    </reaction>
</comment>
<comment type="subunit">
    <text evidence="1">Fourteen ClpP subunits assemble into 2 heptameric rings which stack back to back to give a disk-like structure with a central cavity, resembling the structure of eukaryotic proteasomes.</text>
</comment>
<comment type="subcellular location">
    <subcellularLocation>
        <location evidence="1">Cytoplasm</location>
    </subcellularLocation>
</comment>
<comment type="similarity">
    <text evidence="1">Belongs to the peptidase S14 family.</text>
</comment>
<sequence>MTDQIRMAQASAGMNLSDSVYERLLRERIIFLGTQVDDEIANKLCAQILLLSAEDPTRDISLYINSPGGSVTAGMAIYDTMKYSPCDIATYGMGLAASMGQFLLSGGTKGKRFALPHARIMMHQPSAGVGGTAADIAIQAEQFAQTKREMAELIAEHTGQSFEQITKDSDRDRWFTAQQAKEYGIVDHVIESAQGPLSN</sequence>
<feature type="chain" id="PRO_0000179542" description="ATP-dependent Clp protease proteolytic subunit 2">
    <location>
        <begin position="1"/>
        <end position="199"/>
    </location>
</feature>
<feature type="active site" description="Nucleophile" evidence="1">
    <location>
        <position position="98"/>
    </location>
</feature>
<feature type="active site" evidence="1">
    <location>
        <position position="123"/>
    </location>
</feature>
<gene>
    <name evidence="1" type="primary">clpP2</name>
    <name type="ordered locus">DIP1792</name>
</gene>
<reference key="1">
    <citation type="journal article" date="2003" name="Nucleic Acids Res.">
        <title>The complete genome sequence and analysis of Corynebacterium diphtheriae NCTC13129.</title>
        <authorList>
            <person name="Cerdeno-Tarraga A.-M."/>
            <person name="Efstratiou A."/>
            <person name="Dover L.G."/>
            <person name="Holden M.T.G."/>
            <person name="Pallen M.J."/>
            <person name="Bentley S.D."/>
            <person name="Besra G.S."/>
            <person name="Churcher C.M."/>
            <person name="James K.D."/>
            <person name="De Zoysa A."/>
            <person name="Chillingworth T."/>
            <person name="Cronin A."/>
            <person name="Dowd L."/>
            <person name="Feltwell T."/>
            <person name="Hamlin N."/>
            <person name="Holroyd S."/>
            <person name="Jagels K."/>
            <person name="Moule S."/>
            <person name="Quail M.A."/>
            <person name="Rabbinowitsch E."/>
            <person name="Rutherford K.M."/>
            <person name="Thomson N.R."/>
            <person name="Unwin L."/>
            <person name="Whitehead S."/>
            <person name="Barrell B.G."/>
            <person name="Parkhill J."/>
        </authorList>
    </citation>
    <scope>NUCLEOTIDE SEQUENCE [LARGE SCALE GENOMIC DNA]</scope>
    <source>
        <strain>ATCC 700971 / NCTC 13129 / Biotype gravis</strain>
    </source>
</reference>
<dbReference type="EC" id="3.4.21.92" evidence="1"/>
<dbReference type="EMBL" id="BX248359">
    <property type="protein sequence ID" value="CAE50322.1"/>
    <property type="molecule type" value="Genomic_DNA"/>
</dbReference>
<dbReference type="RefSeq" id="WP_003852476.1">
    <property type="nucleotide sequence ID" value="NC_002935.2"/>
</dbReference>
<dbReference type="SMR" id="Q6NFU4"/>
<dbReference type="STRING" id="257309.DIP1792"/>
<dbReference type="MEROPS" id="S14.008"/>
<dbReference type="KEGG" id="cdi:DIP1792"/>
<dbReference type="HOGENOM" id="CLU_058707_3_2_11"/>
<dbReference type="Proteomes" id="UP000002198">
    <property type="component" value="Chromosome"/>
</dbReference>
<dbReference type="GO" id="GO:0005737">
    <property type="term" value="C:cytoplasm"/>
    <property type="evidence" value="ECO:0007669"/>
    <property type="project" value="UniProtKB-SubCell"/>
</dbReference>
<dbReference type="GO" id="GO:0009368">
    <property type="term" value="C:endopeptidase Clp complex"/>
    <property type="evidence" value="ECO:0007669"/>
    <property type="project" value="TreeGrafter"/>
</dbReference>
<dbReference type="GO" id="GO:0004176">
    <property type="term" value="F:ATP-dependent peptidase activity"/>
    <property type="evidence" value="ECO:0007669"/>
    <property type="project" value="InterPro"/>
</dbReference>
<dbReference type="GO" id="GO:0051117">
    <property type="term" value="F:ATPase binding"/>
    <property type="evidence" value="ECO:0007669"/>
    <property type="project" value="TreeGrafter"/>
</dbReference>
<dbReference type="GO" id="GO:0004252">
    <property type="term" value="F:serine-type endopeptidase activity"/>
    <property type="evidence" value="ECO:0007669"/>
    <property type="project" value="UniProtKB-UniRule"/>
</dbReference>
<dbReference type="GO" id="GO:0006515">
    <property type="term" value="P:protein quality control for misfolded or incompletely synthesized proteins"/>
    <property type="evidence" value="ECO:0007669"/>
    <property type="project" value="TreeGrafter"/>
</dbReference>
<dbReference type="CDD" id="cd07017">
    <property type="entry name" value="S14_ClpP_2"/>
    <property type="match status" value="1"/>
</dbReference>
<dbReference type="FunFam" id="3.90.226.10:FF:000002">
    <property type="entry name" value="ATP-dependent Clp protease proteolytic subunit"/>
    <property type="match status" value="1"/>
</dbReference>
<dbReference type="Gene3D" id="3.90.226.10">
    <property type="entry name" value="2-enoyl-CoA Hydratase, Chain A, domain 1"/>
    <property type="match status" value="1"/>
</dbReference>
<dbReference type="HAMAP" id="MF_00444">
    <property type="entry name" value="ClpP"/>
    <property type="match status" value="1"/>
</dbReference>
<dbReference type="InterPro" id="IPR001907">
    <property type="entry name" value="ClpP"/>
</dbReference>
<dbReference type="InterPro" id="IPR029045">
    <property type="entry name" value="ClpP/crotonase-like_dom_sf"/>
</dbReference>
<dbReference type="InterPro" id="IPR023562">
    <property type="entry name" value="ClpP/TepA"/>
</dbReference>
<dbReference type="InterPro" id="IPR033135">
    <property type="entry name" value="ClpP_His_AS"/>
</dbReference>
<dbReference type="NCBIfam" id="NF001368">
    <property type="entry name" value="PRK00277.1"/>
    <property type="match status" value="1"/>
</dbReference>
<dbReference type="NCBIfam" id="NF009205">
    <property type="entry name" value="PRK12553.1"/>
    <property type="match status" value="1"/>
</dbReference>
<dbReference type="PANTHER" id="PTHR10381">
    <property type="entry name" value="ATP-DEPENDENT CLP PROTEASE PROTEOLYTIC SUBUNIT"/>
    <property type="match status" value="1"/>
</dbReference>
<dbReference type="PANTHER" id="PTHR10381:SF70">
    <property type="entry name" value="ATP-DEPENDENT CLP PROTEASE PROTEOLYTIC SUBUNIT"/>
    <property type="match status" value="1"/>
</dbReference>
<dbReference type="Pfam" id="PF00574">
    <property type="entry name" value="CLP_protease"/>
    <property type="match status" value="1"/>
</dbReference>
<dbReference type="PRINTS" id="PR00127">
    <property type="entry name" value="CLPPROTEASEP"/>
</dbReference>
<dbReference type="SUPFAM" id="SSF52096">
    <property type="entry name" value="ClpP/crotonase"/>
    <property type="match status" value="1"/>
</dbReference>
<dbReference type="PROSITE" id="PS00382">
    <property type="entry name" value="CLP_PROTEASE_HIS"/>
    <property type="match status" value="1"/>
</dbReference>
<protein>
    <recommendedName>
        <fullName evidence="1">ATP-dependent Clp protease proteolytic subunit 2</fullName>
        <ecNumber evidence="1">3.4.21.92</ecNumber>
    </recommendedName>
    <alternativeName>
        <fullName evidence="1">Endopeptidase Clp 2</fullName>
    </alternativeName>
</protein>
<keyword id="KW-0963">Cytoplasm</keyword>
<keyword id="KW-0378">Hydrolase</keyword>
<keyword id="KW-0645">Protease</keyword>
<keyword id="KW-1185">Reference proteome</keyword>
<keyword id="KW-0720">Serine protease</keyword>
<accession>Q6NFU4</accession>
<name>CLPP2_CORDI</name>
<organism>
    <name type="scientific">Corynebacterium diphtheriae (strain ATCC 700971 / NCTC 13129 / Biotype gravis)</name>
    <dbReference type="NCBI Taxonomy" id="257309"/>
    <lineage>
        <taxon>Bacteria</taxon>
        <taxon>Bacillati</taxon>
        <taxon>Actinomycetota</taxon>
        <taxon>Actinomycetes</taxon>
        <taxon>Mycobacteriales</taxon>
        <taxon>Corynebacteriaceae</taxon>
        <taxon>Corynebacterium</taxon>
    </lineage>
</organism>